<proteinExistence type="inferred from homology"/>
<gene>
    <name evidence="1" type="primary">rpsB</name>
    <name type="ordered locus">FTA_0240</name>
</gene>
<feature type="chain" id="PRO_0000351992" description="Small ribosomal subunit protein uS2">
    <location>
        <begin position="1"/>
        <end position="239"/>
    </location>
</feature>
<accession>A7N9R4</accession>
<organism>
    <name type="scientific">Francisella tularensis subsp. holarctica (strain FTNF002-00 / FTA)</name>
    <dbReference type="NCBI Taxonomy" id="458234"/>
    <lineage>
        <taxon>Bacteria</taxon>
        <taxon>Pseudomonadati</taxon>
        <taxon>Pseudomonadota</taxon>
        <taxon>Gammaproteobacteria</taxon>
        <taxon>Thiotrichales</taxon>
        <taxon>Francisellaceae</taxon>
        <taxon>Francisella</taxon>
    </lineage>
</organism>
<reference key="1">
    <citation type="journal article" date="2009" name="PLoS ONE">
        <title>Complete genome sequence of Francisella tularensis subspecies holarctica FTNF002-00.</title>
        <authorList>
            <person name="Barabote R.D."/>
            <person name="Xie G."/>
            <person name="Brettin T.S."/>
            <person name="Hinrichs S.H."/>
            <person name="Fey P.D."/>
            <person name="Jay J.J."/>
            <person name="Engle J.L."/>
            <person name="Godbole S.D."/>
            <person name="Noronha J.M."/>
            <person name="Scheuermann R.H."/>
            <person name="Zhou L.W."/>
            <person name="Lion C."/>
            <person name="Dempsey M.P."/>
        </authorList>
    </citation>
    <scope>NUCLEOTIDE SEQUENCE [LARGE SCALE GENOMIC DNA]</scope>
    <source>
        <strain>FTNF002-00 / FTA</strain>
    </source>
</reference>
<name>RS2_FRATF</name>
<dbReference type="EMBL" id="CP000803">
    <property type="protein sequence ID" value="ABU60717.1"/>
    <property type="status" value="ALT_INIT"/>
    <property type="molecule type" value="Genomic_DNA"/>
</dbReference>
<dbReference type="RefSeq" id="WP_003014289.1">
    <property type="nucleotide sequence ID" value="NC_009749.1"/>
</dbReference>
<dbReference type="SMR" id="A7N9R4"/>
<dbReference type="KEGG" id="fta:FTA_0240"/>
<dbReference type="HOGENOM" id="CLU_040318_1_0_6"/>
<dbReference type="GO" id="GO:0022627">
    <property type="term" value="C:cytosolic small ribosomal subunit"/>
    <property type="evidence" value="ECO:0007669"/>
    <property type="project" value="TreeGrafter"/>
</dbReference>
<dbReference type="GO" id="GO:0003735">
    <property type="term" value="F:structural constituent of ribosome"/>
    <property type="evidence" value="ECO:0007669"/>
    <property type="project" value="InterPro"/>
</dbReference>
<dbReference type="GO" id="GO:0006412">
    <property type="term" value="P:translation"/>
    <property type="evidence" value="ECO:0007669"/>
    <property type="project" value="UniProtKB-UniRule"/>
</dbReference>
<dbReference type="CDD" id="cd01425">
    <property type="entry name" value="RPS2"/>
    <property type="match status" value="1"/>
</dbReference>
<dbReference type="FunFam" id="1.10.287.610:FF:000001">
    <property type="entry name" value="30S ribosomal protein S2"/>
    <property type="match status" value="1"/>
</dbReference>
<dbReference type="Gene3D" id="3.40.50.10490">
    <property type="entry name" value="Glucose-6-phosphate isomerase like protein, domain 1"/>
    <property type="match status" value="1"/>
</dbReference>
<dbReference type="Gene3D" id="1.10.287.610">
    <property type="entry name" value="Helix hairpin bin"/>
    <property type="match status" value="1"/>
</dbReference>
<dbReference type="HAMAP" id="MF_00291_B">
    <property type="entry name" value="Ribosomal_uS2_B"/>
    <property type="match status" value="1"/>
</dbReference>
<dbReference type="InterPro" id="IPR001865">
    <property type="entry name" value="Ribosomal_uS2"/>
</dbReference>
<dbReference type="InterPro" id="IPR005706">
    <property type="entry name" value="Ribosomal_uS2_bac/mit/plastid"/>
</dbReference>
<dbReference type="InterPro" id="IPR018130">
    <property type="entry name" value="Ribosomal_uS2_CS"/>
</dbReference>
<dbReference type="InterPro" id="IPR023591">
    <property type="entry name" value="Ribosomal_uS2_flav_dom_sf"/>
</dbReference>
<dbReference type="NCBIfam" id="TIGR01011">
    <property type="entry name" value="rpsB_bact"/>
    <property type="match status" value="1"/>
</dbReference>
<dbReference type="PANTHER" id="PTHR12534">
    <property type="entry name" value="30S RIBOSOMAL PROTEIN S2 PROKARYOTIC AND ORGANELLAR"/>
    <property type="match status" value="1"/>
</dbReference>
<dbReference type="PANTHER" id="PTHR12534:SF0">
    <property type="entry name" value="SMALL RIBOSOMAL SUBUNIT PROTEIN US2M"/>
    <property type="match status" value="1"/>
</dbReference>
<dbReference type="Pfam" id="PF00318">
    <property type="entry name" value="Ribosomal_S2"/>
    <property type="match status" value="1"/>
</dbReference>
<dbReference type="PRINTS" id="PR00395">
    <property type="entry name" value="RIBOSOMALS2"/>
</dbReference>
<dbReference type="SUPFAM" id="SSF52313">
    <property type="entry name" value="Ribosomal protein S2"/>
    <property type="match status" value="1"/>
</dbReference>
<dbReference type="PROSITE" id="PS00962">
    <property type="entry name" value="RIBOSOMAL_S2_1"/>
    <property type="match status" value="1"/>
</dbReference>
<evidence type="ECO:0000255" key="1">
    <source>
        <dbReference type="HAMAP-Rule" id="MF_00291"/>
    </source>
</evidence>
<evidence type="ECO:0000305" key="2"/>
<comment type="similarity">
    <text evidence="1">Belongs to the universal ribosomal protein uS2 family.</text>
</comment>
<comment type="sequence caution" evidence="2">
    <conflict type="erroneous initiation">
        <sequence resource="EMBL-CDS" id="ABU60717"/>
    </conflict>
</comment>
<protein>
    <recommendedName>
        <fullName evidence="1">Small ribosomal subunit protein uS2</fullName>
    </recommendedName>
    <alternativeName>
        <fullName evidence="2">30S ribosomal protein S2</fullName>
    </alternativeName>
</protein>
<keyword id="KW-0687">Ribonucleoprotein</keyword>
<keyword id="KW-0689">Ribosomal protein</keyword>
<sequence length="239" mass="26422">MSLMKEMLSAGVHFGHKKAFWNPQMKEYIFGINHGVHIINLEKTVPLFQDAVNFVGKTVANGGKILFVGTKRQAQDIVEAEAKRCGMPFVSHRWLGGMLTNYKTVRQSIKRLAQLEKMREDGTLESLTKKEMLQNIRTIEKLEKVLGGIKEMGGLPDAIVVIDGNKEHIAIQEAQKLGIKVVAIVDTNSNPEGIDYIIPGNDDAVKSISFYMKKFADAVIDAQGLDRAVEAKADEAAQA</sequence>